<proteinExistence type="evidence at protein level"/>
<keyword id="KW-1003">Cell membrane</keyword>
<keyword id="KW-0186">Copper</keyword>
<keyword id="KW-0903">Direct protein sequencing</keyword>
<keyword id="KW-0249">Electron transport</keyword>
<keyword id="KW-0349">Heme</keyword>
<keyword id="KW-0408">Iron</keyword>
<keyword id="KW-0472">Membrane</keyword>
<keyword id="KW-0479">Metal-binding</keyword>
<keyword id="KW-0679">Respiratory chain</keyword>
<keyword id="KW-0732">Signal</keyword>
<keyword id="KW-1278">Translocase</keyword>
<keyword id="KW-0812">Transmembrane</keyword>
<keyword id="KW-1133">Transmembrane helix</keyword>
<keyword id="KW-0813">Transport</keyword>
<protein>
    <recommendedName>
        <fullName>Cytochrome c oxidase subunit 2</fullName>
        <ecNumber>7.1.1.9</ecNumber>
    </recommendedName>
    <alternativeName>
        <fullName>Cytochrome aa3 subunit 2</fullName>
    </alternativeName>
    <alternativeName>
        <fullName>Cytochrome c oxidase polypeptide II</fullName>
    </alternativeName>
    <alternativeName>
        <fullName>Oxidase aa(3) subunit 2</fullName>
    </alternativeName>
</protein>
<sequence>MNKGLCNWRLFSLFGMMALLLAGCGKPFLSTLQPAGEVADMQYSLMLLSTSIMVLVIVVVAIIFVYVVIRFRRRKGEENKIPKQVEGSHKLEIIWTVIPIILLLILAVPTVLTTFKLADVKAMNDKKRDKNTVVVNVRANQYWWEFEYPDYGIITSQDLVVPTNEKVYFNLIASDVKHSFWIPAVGGKMDTNTDNKNQFWLVFDQKATDKAGGVFYGKCAELCGPSHALMDFKVRPLPRDQFDAWVKKMQNAKKPVVTDPVAKEGEAIFNKSCIGCHAVTPLDKRPAQRRTAPNLADFGDRERIAGILEHNEENLKKWLRDPNSVKPGNKMAGTYGHLTEEQIDALTKYLMSLKVE</sequence>
<comment type="function">
    <text>Subunits I and II form the functional core of the enzyme complex. Electrons originating in cytochrome c are transferred via heme a and Cu(A) to the binuclear center formed by heme a3 and Cu(B).</text>
</comment>
<comment type="catalytic activity">
    <reaction>
        <text>4 Fe(II)-[cytochrome c] + O2 + 8 H(+)(in) = 4 Fe(III)-[cytochrome c] + 2 H2O + 4 H(+)(out)</text>
        <dbReference type="Rhea" id="RHEA:11436"/>
        <dbReference type="Rhea" id="RHEA-COMP:10350"/>
        <dbReference type="Rhea" id="RHEA-COMP:14399"/>
        <dbReference type="ChEBI" id="CHEBI:15377"/>
        <dbReference type="ChEBI" id="CHEBI:15378"/>
        <dbReference type="ChEBI" id="CHEBI:15379"/>
        <dbReference type="ChEBI" id="CHEBI:29033"/>
        <dbReference type="ChEBI" id="CHEBI:29034"/>
        <dbReference type="EC" id="7.1.1.9"/>
    </reaction>
</comment>
<comment type="cofactor">
    <cofactor>
        <name>Cu cation</name>
        <dbReference type="ChEBI" id="CHEBI:23378"/>
    </cofactor>
    <text>Binds a copper A center.</text>
</comment>
<comment type="cofactor">
    <cofactor>
        <name>heme c</name>
        <dbReference type="ChEBI" id="CHEBI:61717"/>
    </cofactor>
</comment>
<comment type="subcellular location">
    <subcellularLocation>
        <location>Cell membrane</location>
        <topology>Multi-pass membrane protein</topology>
    </subcellularLocation>
</comment>
<comment type="similarity">
    <text evidence="5">Belongs to the cytochrome c oxidase subunit 2 family.</text>
</comment>
<evidence type="ECO:0000255" key="1"/>
<evidence type="ECO:0000255" key="2">
    <source>
        <dbReference type="PROSITE-ProRule" id="PRU00303"/>
    </source>
</evidence>
<evidence type="ECO:0000255" key="3">
    <source>
        <dbReference type="PROSITE-ProRule" id="PRU00433"/>
    </source>
</evidence>
<evidence type="ECO:0000269" key="4">
    <source>
    </source>
</evidence>
<evidence type="ECO:0000305" key="5"/>
<gene>
    <name type="primary">ctaC</name>
    <name type="synonym">caaA</name>
</gene>
<name>COX2_BACP3</name>
<organism>
    <name type="scientific">Bacillus sp. (strain PS3)</name>
    <dbReference type="NCBI Taxonomy" id="2334"/>
    <lineage>
        <taxon>Bacteria</taxon>
        <taxon>Bacillati</taxon>
        <taxon>Bacillota</taxon>
        <taxon>Bacilli</taxon>
        <taxon>Bacillales</taxon>
        <taxon>Bacillaceae</taxon>
        <taxon>Bacillus</taxon>
    </lineage>
</organism>
<accession>Q03438</accession>
<dbReference type="EC" id="7.1.1.9"/>
<dbReference type="EMBL" id="D13955">
    <property type="protein sequence ID" value="BAA03045.1"/>
    <property type="molecule type" value="Genomic_DNA"/>
</dbReference>
<dbReference type="SMR" id="Q03438"/>
<dbReference type="GO" id="GO:0005886">
    <property type="term" value="C:plasma membrane"/>
    <property type="evidence" value="ECO:0007669"/>
    <property type="project" value="UniProtKB-SubCell"/>
</dbReference>
<dbReference type="GO" id="GO:0005507">
    <property type="term" value="F:copper ion binding"/>
    <property type="evidence" value="ECO:0007669"/>
    <property type="project" value="InterPro"/>
</dbReference>
<dbReference type="GO" id="GO:0004129">
    <property type="term" value="F:cytochrome-c oxidase activity"/>
    <property type="evidence" value="ECO:0007669"/>
    <property type="project" value="UniProtKB-EC"/>
</dbReference>
<dbReference type="GO" id="GO:0020037">
    <property type="term" value="F:heme binding"/>
    <property type="evidence" value="ECO:0007669"/>
    <property type="project" value="InterPro"/>
</dbReference>
<dbReference type="GO" id="GO:0042773">
    <property type="term" value="P:ATP synthesis coupled electron transport"/>
    <property type="evidence" value="ECO:0007669"/>
    <property type="project" value="TreeGrafter"/>
</dbReference>
<dbReference type="FunFam" id="2.60.40.420:FF:000042">
    <property type="entry name" value="Cytochrome c oxidase subunit 2"/>
    <property type="match status" value="1"/>
</dbReference>
<dbReference type="Gene3D" id="1.10.287.90">
    <property type="match status" value="1"/>
</dbReference>
<dbReference type="Gene3D" id="2.60.40.420">
    <property type="entry name" value="Cupredoxins - blue copper proteins"/>
    <property type="match status" value="1"/>
</dbReference>
<dbReference type="InterPro" id="IPR045187">
    <property type="entry name" value="CcO_II"/>
</dbReference>
<dbReference type="InterPro" id="IPR002429">
    <property type="entry name" value="CcO_II-like_C"/>
</dbReference>
<dbReference type="InterPro" id="IPR001505">
    <property type="entry name" value="Copper_CuA"/>
</dbReference>
<dbReference type="InterPro" id="IPR008972">
    <property type="entry name" value="Cupredoxin"/>
</dbReference>
<dbReference type="InterPro" id="IPR009056">
    <property type="entry name" value="Cyt_c-like_dom"/>
</dbReference>
<dbReference type="InterPro" id="IPR036909">
    <property type="entry name" value="Cyt_c-like_dom_sf"/>
</dbReference>
<dbReference type="InterPro" id="IPR014222">
    <property type="entry name" value="Cyt_c_oxidase_su2"/>
</dbReference>
<dbReference type="InterPro" id="IPR011759">
    <property type="entry name" value="Cyt_c_oxidase_su2_TM_dom"/>
</dbReference>
<dbReference type="InterPro" id="IPR036257">
    <property type="entry name" value="Cyt_c_oxidase_su2_TM_sf"/>
</dbReference>
<dbReference type="NCBIfam" id="TIGR02866">
    <property type="entry name" value="CoxB"/>
    <property type="match status" value="1"/>
</dbReference>
<dbReference type="PANTHER" id="PTHR22888:SF10">
    <property type="entry name" value="CYTOCHROME C OXIDASE SUBUNIT 2"/>
    <property type="match status" value="1"/>
</dbReference>
<dbReference type="PANTHER" id="PTHR22888">
    <property type="entry name" value="CYTOCHROME C OXIDASE, SUBUNIT II"/>
    <property type="match status" value="1"/>
</dbReference>
<dbReference type="Pfam" id="PF00116">
    <property type="entry name" value="COX2"/>
    <property type="match status" value="1"/>
</dbReference>
<dbReference type="Pfam" id="PF02790">
    <property type="entry name" value="COX2_TM"/>
    <property type="match status" value="1"/>
</dbReference>
<dbReference type="Pfam" id="PF00034">
    <property type="entry name" value="Cytochrom_C"/>
    <property type="match status" value="1"/>
</dbReference>
<dbReference type="PRINTS" id="PR01166">
    <property type="entry name" value="CYCOXIDASEII"/>
</dbReference>
<dbReference type="SUPFAM" id="SSF49503">
    <property type="entry name" value="Cupredoxins"/>
    <property type="match status" value="1"/>
</dbReference>
<dbReference type="SUPFAM" id="SSF46626">
    <property type="entry name" value="Cytochrome c"/>
    <property type="match status" value="1"/>
</dbReference>
<dbReference type="SUPFAM" id="SSF81464">
    <property type="entry name" value="Cytochrome c oxidase subunit II-like, transmembrane region"/>
    <property type="match status" value="1"/>
</dbReference>
<dbReference type="PROSITE" id="PS00078">
    <property type="entry name" value="COX2"/>
    <property type="match status" value="1"/>
</dbReference>
<dbReference type="PROSITE" id="PS50857">
    <property type="entry name" value="COX2_CUA"/>
    <property type="match status" value="1"/>
</dbReference>
<dbReference type="PROSITE" id="PS50999">
    <property type="entry name" value="COX2_TM"/>
    <property type="match status" value="1"/>
</dbReference>
<dbReference type="PROSITE" id="PS51007">
    <property type="entry name" value="CYTC"/>
    <property type="match status" value="1"/>
</dbReference>
<dbReference type="PROSITE" id="PS51257">
    <property type="entry name" value="PROKAR_LIPOPROTEIN"/>
    <property type="match status" value="1"/>
</dbReference>
<feature type="signal peptide" evidence="2 4">
    <location>
        <begin position="1"/>
        <end position="23"/>
    </location>
</feature>
<feature type="chain" id="PRO_0000006050" description="Cytochrome c oxidase subunit 2">
    <location>
        <begin position="24"/>
        <end position="356"/>
    </location>
</feature>
<feature type="transmembrane region" description="Helical" evidence="1">
    <location>
        <begin position="45"/>
        <end position="65"/>
    </location>
</feature>
<feature type="transmembrane region" description="Helical" evidence="1">
    <location>
        <begin position="93"/>
        <end position="113"/>
    </location>
</feature>
<feature type="domain" description="Cytochrome c" evidence="3">
    <location>
        <begin position="260"/>
        <end position="356"/>
    </location>
</feature>
<feature type="region of interest" description="Cytochrome c oxidase subunit II">
    <location>
        <begin position="24"/>
        <end position="259"/>
    </location>
</feature>
<feature type="binding site" evidence="5">
    <location>
        <position position="178"/>
    </location>
    <ligand>
        <name>Cu cation</name>
        <dbReference type="ChEBI" id="CHEBI:23378"/>
        <label>A</label>
    </ligand>
</feature>
<feature type="binding site" evidence="5">
    <location>
        <position position="219"/>
    </location>
    <ligand>
        <name>Cu cation</name>
        <dbReference type="ChEBI" id="CHEBI:23378"/>
        <label>A</label>
    </ligand>
</feature>
<feature type="binding site" evidence="5">
    <location>
        <position position="223"/>
    </location>
    <ligand>
        <name>Cu cation</name>
        <dbReference type="ChEBI" id="CHEBI:23378"/>
        <label>A</label>
    </ligand>
</feature>
<feature type="binding site" evidence="5">
    <location>
        <position position="227"/>
    </location>
    <ligand>
        <name>Cu cation</name>
        <dbReference type="ChEBI" id="CHEBI:23378"/>
        <label>A</label>
    </ligand>
</feature>
<feature type="binding site" description="covalent" evidence="5">
    <location>
        <position position="273"/>
    </location>
    <ligand>
        <name>heme c</name>
        <dbReference type="ChEBI" id="CHEBI:61717"/>
    </ligand>
</feature>
<feature type="binding site" description="covalent" evidence="5">
    <location>
        <position position="276"/>
    </location>
    <ligand>
        <name>heme c</name>
        <dbReference type="ChEBI" id="CHEBI:61717"/>
    </ligand>
</feature>
<feature type="binding site" description="axial binding residue" evidence="5">
    <location>
        <position position="277"/>
    </location>
    <ligand>
        <name>heme c</name>
        <dbReference type="ChEBI" id="CHEBI:61717"/>
    </ligand>
    <ligandPart>
        <name>Fe</name>
        <dbReference type="ChEBI" id="CHEBI:18248"/>
    </ligandPart>
</feature>
<feature type="binding site" description="axial binding residue" evidence="5">
    <location>
        <position position="331"/>
    </location>
    <ligand>
        <name>heme c</name>
        <dbReference type="ChEBI" id="CHEBI:61717"/>
    </ligand>
    <ligandPart>
        <name>Fe</name>
        <dbReference type="ChEBI" id="CHEBI:18248"/>
    </ligandPart>
</feature>
<reference key="1">
    <citation type="journal article" date="1990" name="J. Biochem.">
        <title>Nucleotide sequence of the gene coding for four subunits of cytochrome c oxidase from the thermophilic bacterium PS3.</title>
        <authorList>
            <person name="Ishizuka M."/>
            <person name="Machida K."/>
            <person name="Shimada S."/>
            <person name="Mogi A."/>
            <person name="Tsuchiya T."/>
            <person name="Ohmori T."/>
            <person name="Souma Y."/>
            <person name="Gonda M."/>
            <person name="Sone N."/>
        </authorList>
    </citation>
    <scope>NUCLEOTIDE SEQUENCE [GENOMIC DNA]</scope>
    <scope>PROTEIN SEQUENCE OF 24-48</scope>
</reference>